<dbReference type="EC" id="2.1.2.1"/>
<dbReference type="EMBL" id="CR382126">
    <property type="protein sequence ID" value="CAG97841.1"/>
    <property type="molecule type" value="Genomic_DNA"/>
</dbReference>
<dbReference type="RefSeq" id="XP_455134.1">
    <property type="nucleotide sequence ID" value="XM_455134.1"/>
</dbReference>
<dbReference type="SMR" id="Q6CLQ5"/>
<dbReference type="FunCoup" id="Q6CLQ5">
    <property type="interactions" value="457"/>
</dbReference>
<dbReference type="STRING" id="284590.Q6CLQ5"/>
<dbReference type="PaxDb" id="284590-Q6CLQ5"/>
<dbReference type="KEGG" id="kla:KLLA0_F01210g"/>
<dbReference type="eggNOG" id="KOG2467">
    <property type="taxonomic scope" value="Eukaryota"/>
</dbReference>
<dbReference type="HOGENOM" id="CLU_022477_0_0_1"/>
<dbReference type="InParanoid" id="Q6CLQ5"/>
<dbReference type="OMA" id="TQPFFSQ"/>
<dbReference type="UniPathway" id="UPA00193"/>
<dbReference type="Proteomes" id="UP000000598">
    <property type="component" value="Chromosome F"/>
</dbReference>
<dbReference type="GO" id="GO:0005739">
    <property type="term" value="C:mitochondrion"/>
    <property type="evidence" value="ECO:0007669"/>
    <property type="project" value="UniProtKB-SubCell"/>
</dbReference>
<dbReference type="GO" id="GO:0004372">
    <property type="term" value="F:glycine hydroxymethyltransferase activity"/>
    <property type="evidence" value="ECO:0007669"/>
    <property type="project" value="UniProtKB-EC"/>
</dbReference>
<dbReference type="GO" id="GO:0030170">
    <property type="term" value="F:pyridoxal phosphate binding"/>
    <property type="evidence" value="ECO:0007669"/>
    <property type="project" value="InterPro"/>
</dbReference>
<dbReference type="GO" id="GO:0019264">
    <property type="term" value="P:glycine biosynthetic process from serine"/>
    <property type="evidence" value="ECO:0007669"/>
    <property type="project" value="InterPro"/>
</dbReference>
<dbReference type="GO" id="GO:0035999">
    <property type="term" value="P:tetrahydrofolate interconversion"/>
    <property type="evidence" value="ECO:0007669"/>
    <property type="project" value="UniProtKB-UniPathway"/>
</dbReference>
<dbReference type="CDD" id="cd00378">
    <property type="entry name" value="SHMT"/>
    <property type="match status" value="1"/>
</dbReference>
<dbReference type="FunFam" id="3.40.640.10:FF:000097">
    <property type="entry name" value="Serine hydroxymethyltransferase"/>
    <property type="match status" value="1"/>
</dbReference>
<dbReference type="Gene3D" id="3.90.1150.10">
    <property type="entry name" value="Aspartate Aminotransferase, domain 1"/>
    <property type="match status" value="1"/>
</dbReference>
<dbReference type="Gene3D" id="3.40.640.10">
    <property type="entry name" value="Type I PLP-dependent aspartate aminotransferase-like (Major domain)"/>
    <property type="match status" value="1"/>
</dbReference>
<dbReference type="HAMAP" id="MF_00051">
    <property type="entry name" value="SHMT"/>
    <property type="match status" value="1"/>
</dbReference>
<dbReference type="InterPro" id="IPR015424">
    <property type="entry name" value="PyrdxlP-dep_Trfase"/>
</dbReference>
<dbReference type="InterPro" id="IPR015421">
    <property type="entry name" value="PyrdxlP-dep_Trfase_major"/>
</dbReference>
<dbReference type="InterPro" id="IPR015422">
    <property type="entry name" value="PyrdxlP-dep_Trfase_small"/>
</dbReference>
<dbReference type="InterPro" id="IPR001085">
    <property type="entry name" value="Ser_HO-MeTrfase"/>
</dbReference>
<dbReference type="InterPro" id="IPR049943">
    <property type="entry name" value="Ser_HO-MeTrfase-like"/>
</dbReference>
<dbReference type="InterPro" id="IPR019798">
    <property type="entry name" value="Ser_HO-MeTrfase_PLP_BS"/>
</dbReference>
<dbReference type="InterPro" id="IPR039429">
    <property type="entry name" value="SHMT-like_dom"/>
</dbReference>
<dbReference type="NCBIfam" id="NF000586">
    <property type="entry name" value="PRK00011.1"/>
    <property type="match status" value="1"/>
</dbReference>
<dbReference type="PANTHER" id="PTHR11680">
    <property type="entry name" value="SERINE HYDROXYMETHYLTRANSFERASE"/>
    <property type="match status" value="1"/>
</dbReference>
<dbReference type="PANTHER" id="PTHR11680:SF57">
    <property type="entry name" value="SERINE HYDROXYMETHYLTRANSFERASE, MITOCHONDRIAL"/>
    <property type="match status" value="1"/>
</dbReference>
<dbReference type="Pfam" id="PF00464">
    <property type="entry name" value="SHMT"/>
    <property type="match status" value="1"/>
</dbReference>
<dbReference type="PIRSF" id="PIRSF000412">
    <property type="entry name" value="SHMT"/>
    <property type="match status" value="1"/>
</dbReference>
<dbReference type="SUPFAM" id="SSF53383">
    <property type="entry name" value="PLP-dependent transferases"/>
    <property type="match status" value="1"/>
</dbReference>
<dbReference type="PROSITE" id="PS00096">
    <property type="entry name" value="SHMT"/>
    <property type="match status" value="1"/>
</dbReference>
<protein>
    <recommendedName>
        <fullName>Serine hydroxymethyltransferase, mitochondrial</fullName>
        <shortName>SHMT</shortName>
        <ecNumber>2.1.2.1</ecNumber>
    </recommendedName>
    <alternativeName>
        <fullName>Glycine hydroxymethyltransferase</fullName>
    </alternativeName>
    <alternativeName>
        <fullName>Serine methylase</fullName>
    </alternativeName>
</protein>
<sequence>MLSRSARCSRAVLFSAKRSLASQANTGANASANQVMVSKHVQDIDPEMYDILTKERKRQKHSITLIPSENFTSKSVMDLLGSEMQNKYSEGYPGERYYGGNQFIDMAESLCQKRALELYNLDPQLWGVNVQPLSGAPANLYAYSAVMETNDRLMGLDLPHGGHLSHGYQLPSGTKISYISKYFQTMPYHVDSQTGIIDYDFLSKTSKLFRPKVIVAGASAYSRVLDYKRFKEIADACGAYLMSDMAHISGLVAAGVTRSPFEYSDIVTTTTHKSLRGPRGAMIFYRKGVRKVTKKGKEVLYDLDKRINFSVFPGHQGGPHNHTISALAVALKQAATPEFKEYQAAVVENARIFGEELVKKGFELVSGGTDTHLILINLSNLGIDGARLETLLENINIAANKNTIPGDKSALFPSGLRVGTPAMTTRGFGPQEFAQVAAYIDRAVKLAIGIKSQESPDAKDARSKLASFKELCKESDQVKQLADEVYQWVGEFPVPGEL</sequence>
<proteinExistence type="inferred from homology"/>
<organism>
    <name type="scientific">Kluyveromyces lactis (strain ATCC 8585 / CBS 2359 / DSM 70799 / NBRC 1267 / NRRL Y-1140 / WM37)</name>
    <name type="common">Yeast</name>
    <name type="synonym">Candida sphaerica</name>
    <dbReference type="NCBI Taxonomy" id="284590"/>
    <lineage>
        <taxon>Eukaryota</taxon>
        <taxon>Fungi</taxon>
        <taxon>Dikarya</taxon>
        <taxon>Ascomycota</taxon>
        <taxon>Saccharomycotina</taxon>
        <taxon>Saccharomycetes</taxon>
        <taxon>Saccharomycetales</taxon>
        <taxon>Saccharomycetaceae</taxon>
        <taxon>Kluyveromyces</taxon>
    </lineage>
</organism>
<feature type="transit peptide" description="Mitochondrion" evidence="2">
    <location>
        <begin position="1"/>
        <end status="unknown"/>
    </location>
</feature>
<feature type="chain" id="PRO_0000043328" description="Serine hydroxymethyltransferase, mitochondrial">
    <location>
        <begin status="unknown"/>
        <end position="498"/>
    </location>
</feature>
<feature type="modified residue" description="N6-(pyridoxal phosphate)lysine" evidence="1">
    <location>
        <position position="273"/>
    </location>
</feature>
<keyword id="KW-0496">Mitochondrion</keyword>
<keyword id="KW-0554">One-carbon metabolism</keyword>
<keyword id="KW-0663">Pyridoxal phosphate</keyword>
<keyword id="KW-1185">Reference proteome</keyword>
<keyword id="KW-0808">Transferase</keyword>
<keyword id="KW-0809">Transit peptide</keyword>
<name>GLYM_KLULA</name>
<comment type="function">
    <text>Interconversion of serine and glycine.</text>
</comment>
<comment type="catalytic activity">
    <reaction>
        <text>(6R)-5,10-methylene-5,6,7,8-tetrahydrofolate + glycine + H2O = (6S)-5,6,7,8-tetrahydrofolate + L-serine</text>
        <dbReference type="Rhea" id="RHEA:15481"/>
        <dbReference type="ChEBI" id="CHEBI:15377"/>
        <dbReference type="ChEBI" id="CHEBI:15636"/>
        <dbReference type="ChEBI" id="CHEBI:33384"/>
        <dbReference type="ChEBI" id="CHEBI:57305"/>
        <dbReference type="ChEBI" id="CHEBI:57453"/>
        <dbReference type="EC" id="2.1.2.1"/>
    </reaction>
</comment>
<comment type="cofactor">
    <cofactor evidence="1">
        <name>pyridoxal 5'-phosphate</name>
        <dbReference type="ChEBI" id="CHEBI:597326"/>
    </cofactor>
</comment>
<comment type="pathway">
    <text>One-carbon metabolism; tetrahydrofolate interconversion.</text>
</comment>
<comment type="subunit">
    <text evidence="1">Homotetramer.</text>
</comment>
<comment type="subcellular location">
    <subcellularLocation>
        <location>Mitochondrion</location>
    </subcellularLocation>
</comment>
<comment type="miscellaneous">
    <text>In eukaryotes there are two forms of the enzymes: a cytosolic one and a mitochondrial one.</text>
</comment>
<comment type="similarity">
    <text evidence="3">Belongs to the SHMT family.</text>
</comment>
<gene>
    <name type="primary">SHM1</name>
    <name type="ordered locus">KLLA0F01210g</name>
</gene>
<evidence type="ECO:0000250" key="1"/>
<evidence type="ECO:0000255" key="2"/>
<evidence type="ECO:0000305" key="3"/>
<reference key="1">
    <citation type="journal article" date="2004" name="Nature">
        <title>Genome evolution in yeasts.</title>
        <authorList>
            <person name="Dujon B."/>
            <person name="Sherman D."/>
            <person name="Fischer G."/>
            <person name="Durrens P."/>
            <person name="Casaregola S."/>
            <person name="Lafontaine I."/>
            <person name="de Montigny J."/>
            <person name="Marck C."/>
            <person name="Neuveglise C."/>
            <person name="Talla E."/>
            <person name="Goffard N."/>
            <person name="Frangeul L."/>
            <person name="Aigle M."/>
            <person name="Anthouard V."/>
            <person name="Babour A."/>
            <person name="Barbe V."/>
            <person name="Barnay S."/>
            <person name="Blanchin S."/>
            <person name="Beckerich J.-M."/>
            <person name="Beyne E."/>
            <person name="Bleykasten C."/>
            <person name="Boisrame A."/>
            <person name="Boyer J."/>
            <person name="Cattolico L."/>
            <person name="Confanioleri F."/>
            <person name="de Daruvar A."/>
            <person name="Despons L."/>
            <person name="Fabre E."/>
            <person name="Fairhead C."/>
            <person name="Ferry-Dumazet H."/>
            <person name="Groppi A."/>
            <person name="Hantraye F."/>
            <person name="Hennequin C."/>
            <person name="Jauniaux N."/>
            <person name="Joyet P."/>
            <person name="Kachouri R."/>
            <person name="Kerrest A."/>
            <person name="Koszul R."/>
            <person name="Lemaire M."/>
            <person name="Lesur I."/>
            <person name="Ma L."/>
            <person name="Muller H."/>
            <person name="Nicaud J.-M."/>
            <person name="Nikolski M."/>
            <person name="Oztas S."/>
            <person name="Ozier-Kalogeropoulos O."/>
            <person name="Pellenz S."/>
            <person name="Potier S."/>
            <person name="Richard G.-F."/>
            <person name="Straub M.-L."/>
            <person name="Suleau A."/>
            <person name="Swennen D."/>
            <person name="Tekaia F."/>
            <person name="Wesolowski-Louvel M."/>
            <person name="Westhof E."/>
            <person name="Wirth B."/>
            <person name="Zeniou-Meyer M."/>
            <person name="Zivanovic Y."/>
            <person name="Bolotin-Fukuhara M."/>
            <person name="Thierry A."/>
            <person name="Bouchier C."/>
            <person name="Caudron B."/>
            <person name="Scarpelli C."/>
            <person name="Gaillardin C."/>
            <person name="Weissenbach J."/>
            <person name="Wincker P."/>
            <person name="Souciet J.-L."/>
        </authorList>
    </citation>
    <scope>NUCLEOTIDE SEQUENCE [LARGE SCALE GENOMIC DNA]</scope>
    <source>
        <strain>ATCC 8585 / CBS 2359 / DSM 70799 / NBRC 1267 / NRRL Y-1140 / WM37</strain>
    </source>
</reference>
<accession>Q6CLQ5</accession>